<comment type="function">
    <text evidence="1">Displays ATPase and GTPase activities.</text>
</comment>
<comment type="similarity">
    <text evidence="1">Belongs to the RapZ-like family.</text>
</comment>
<keyword id="KW-0067">ATP-binding</keyword>
<keyword id="KW-0342">GTP-binding</keyword>
<keyword id="KW-0547">Nucleotide-binding</keyword>
<protein>
    <recommendedName>
        <fullName evidence="1">Nucleotide-binding protein Shal_3708</fullName>
    </recommendedName>
</protein>
<accession>B0TUY1</accession>
<sequence length="284" mass="32655">MKLVLVSGRSGSGKSVLLRMLEDLGYYCVDNLPLPMMGTLLKELSGNTNLVAISVDIRNLPEKESELIKHLTNLPDGVELLSFFLNSSDEVLLKRYNETRRLHPLSHDNVSLKEAIEIEGRSLEPLANIVDHYIDTSTLNIYDLNDQVREILLGNLDKELMINFESFGFKHGMPTEADFMFDVRFLPNPHWEPDLRPMTGLDKPVQDFLNERPRVNQFIKQIEDLLETWLPDLERNNRSYLTIAIGCTGGQHRSVYITERLAAHFKDGKHKIQVRHRELKNADH</sequence>
<dbReference type="EMBL" id="CP000931">
    <property type="protein sequence ID" value="ABZ78248.1"/>
    <property type="molecule type" value="Genomic_DNA"/>
</dbReference>
<dbReference type="RefSeq" id="WP_012278766.1">
    <property type="nucleotide sequence ID" value="NC_010334.1"/>
</dbReference>
<dbReference type="SMR" id="B0TUY1"/>
<dbReference type="STRING" id="458817.Shal_3708"/>
<dbReference type="KEGG" id="shl:Shal_3708"/>
<dbReference type="eggNOG" id="COG1660">
    <property type="taxonomic scope" value="Bacteria"/>
</dbReference>
<dbReference type="HOGENOM" id="CLU_059558_1_1_6"/>
<dbReference type="OrthoDB" id="9784461at2"/>
<dbReference type="Proteomes" id="UP000001317">
    <property type="component" value="Chromosome"/>
</dbReference>
<dbReference type="GO" id="GO:0005524">
    <property type="term" value="F:ATP binding"/>
    <property type="evidence" value="ECO:0007669"/>
    <property type="project" value="UniProtKB-UniRule"/>
</dbReference>
<dbReference type="GO" id="GO:0005525">
    <property type="term" value="F:GTP binding"/>
    <property type="evidence" value="ECO:0007669"/>
    <property type="project" value="UniProtKB-UniRule"/>
</dbReference>
<dbReference type="Gene3D" id="3.40.50.300">
    <property type="entry name" value="P-loop containing nucleotide triphosphate hydrolases"/>
    <property type="match status" value="1"/>
</dbReference>
<dbReference type="HAMAP" id="MF_00636">
    <property type="entry name" value="RapZ_like"/>
    <property type="match status" value="1"/>
</dbReference>
<dbReference type="InterPro" id="IPR027417">
    <property type="entry name" value="P-loop_NTPase"/>
</dbReference>
<dbReference type="InterPro" id="IPR005337">
    <property type="entry name" value="RapZ-like"/>
</dbReference>
<dbReference type="InterPro" id="IPR053930">
    <property type="entry name" value="RapZ-like_N"/>
</dbReference>
<dbReference type="InterPro" id="IPR053931">
    <property type="entry name" value="RapZ_C"/>
</dbReference>
<dbReference type="NCBIfam" id="NF003828">
    <property type="entry name" value="PRK05416.1"/>
    <property type="match status" value="1"/>
</dbReference>
<dbReference type="PANTHER" id="PTHR30448">
    <property type="entry name" value="RNASE ADAPTER PROTEIN RAPZ"/>
    <property type="match status" value="1"/>
</dbReference>
<dbReference type="PANTHER" id="PTHR30448:SF0">
    <property type="entry name" value="RNASE ADAPTER PROTEIN RAPZ"/>
    <property type="match status" value="1"/>
</dbReference>
<dbReference type="Pfam" id="PF22740">
    <property type="entry name" value="PapZ_C"/>
    <property type="match status" value="1"/>
</dbReference>
<dbReference type="Pfam" id="PF03668">
    <property type="entry name" value="RapZ-like_N"/>
    <property type="match status" value="1"/>
</dbReference>
<dbReference type="PIRSF" id="PIRSF005052">
    <property type="entry name" value="P-loopkin"/>
    <property type="match status" value="1"/>
</dbReference>
<dbReference type="SUPFAM" id="SSF52540">
    <property type="entry name" value="P-loop containing nucleoside triphosphate hydrolases"/>
    <property type="match status" value="1"/>
</dbReference>
<feature type="chain" id="PRO_1000082665" description="Nucleotide-binding protein Shal_3708">
    <location>
        <begin position="1"/>
        <end position="284"/>
    </location>
</feature>
<feature type="binding site" evidence="1">
    <location>
        <begin position="8"/>
        <end position="15"/>
    </location>
    <ligand>
        <name>ATP</name>
        <dbReference type="ChEBI" id="CHEBI:30616"/>
    </ligand>
</feature>
<feature type="binding site" evidence="1">
    <location>
        <begin position="56"/>
        <end position="59"/>
    </location>
    <ligand>
        <name>GTP</name>
        <dbReference type="ChEBI" id="CHEBI:37565"/>
    </ligand>
</feature>
<evidence type="ECO:0000255" key="1">
    <source>
        <dbReference type="HAMAP-Rule" id="MF_00636"/>
    </source>
</evidence>
<proteinExistence type="inferred from homology"/>
<reference key="1">
    <citation type="submission" date="2008-01" db="EMBL/GenBank/DDBJ databases">
        <title>Complete sequence of Shewanella halifaxensis HAW-EB4.</title>
        <authorList>
            <consortium name="US DOE Joint Genome Institute"/>
            <person name="Copeland A."/>
            <person name="Lucas S."/>
            <person name="Lapidus A."/>
            <person name="Glavina del Rio T."/>
            <person name="Dalin E."/>
            <person name="Tice H."/>
            <person name="Bruce D."/>
            <person name="Goodwin L."/>
            <person name="Pitluck S."/>
            <person name="Sims D."/>
            <person name="Brettin T."/>
            <person name="Detter J.C."/>
            <person name="Han C."/>
            <person name="Kuske C.R."/>
            <person name="Schmutz J."/>
            <person name="Larimer F."/>
            <person name="Land M."/>
            <person name="Hauser L."/>
            <person name="Kyrpides N."/>
            <person name="Kim E."/>
            <person name="Zhao J.-S."/>
            <person name="Richardson P."/>
        </authorList>
    </citation>
    <scope>NUCLEOTIDE SEQUENCE [LARGE SCALE GENOMIC DNA]</scope>
    <source>
        <strain>HAW-EB4</strain>
    </source>
</reference>
<gene>
    <name type="ordered locus">Shal_3708</name>
</gene>
<name>Y3708_SHEHH</name>
<organism>
    <name type="scientific">Shewanella halifaxensis (strain HAW-EB4)</name>
    <dbReference type="NCBI Taxonomy" id="458817"/>
    <lineage>
        <taxon>Bacteria</taxon>
        <taxon>Pseudomonadati</taxon>
        <taxon>Pseudomonadota</taxon>
        <taxon>Gammaproteobacteria</taxon>
        <taxon>Alteromonadales</taxon>
        <taxon>Shewanellaceae</taxon>
        <taxon>Shewanella</taxon>
    </lineage>
</organism>